<feature type="chain" id="PRO_1000048410" description="Light-independent protochlorophyllide reductase subunit B">
    <location>
        <begin position="1"/>
        <end position="525"/>
    </location>
</feature>
<feature type="active site" description="Proton donor" evidence="1">
    <location>
        <position position="290"/>
    </location>
</feature>
<feature type="binding site" evidence="1">
    <location>
        <position position="36"/>
    </location>
    <ligand>
        <name>[4Fe-4S] cluster</name>
        <dbReference type="ChEBI" id="CHEBI:49883"/>
        <note>ligand shared with heterodimeric partner</note>
    </ligand>
</feature>
<feature type="binding site" evidence="1">
    <location>
        <begin position="425"/>
        <end position="426"/>
    </location>
    <ligand>
        <name>substrate</name>
    </ligand>
</feature>
<protein>
    <recommendedName>
        <fullName evidence="1">Light-independent protochlorophyllide reductase subunit B</fullName>
        <shortName evidence="1">DPOR subunit B</shortName>
        <shortName evidence="1">LI-POR subunit B</shortName>
        <ecNumber evidence="1">1.3.7.7</ecNumber>
    </recommendedName>
</protein>
<evidence type="ECO:0000255" key="1">
    <source>
        <dbReference type="HAMAP-Rule" id="MF_00353"/>
    </source>
</evidence>
<proteinExistence type="inferred from homology"/>
<comment type="function">
    <text evidence="1">Component of the dark-operative protochlorophyllide reductase (DPOR) that uses Mg-ATP and reduced ferredoxin to reduce ring D of protochlorophyllide (Pchlide) to form chlorophyllide a (Chlide). This reaction is light-independent. The NB-protein (ChlN-ChlB) is the catalytic component of the complex.</text>
</comment>
<comment type="catalytic activity">
    <reaction evidence="1">
        <text>chlorophyllide a + oxidized 2[4Fe-4S]-[ferredoxin] + 2 ADP + 2 phosphate = protochlorophyllide a + reduced 2[4Fe-4S]-[ferredoxin] + 2 ATP + 2 H2O</text>
        <dbReference type="Rhea" id="RHEA:28202"/>
        <dbReference type="Rhea" id="RHEA-COMP:10002"/>
        <dbReference type="Rhea" id="RHEA-COMP:10004"/>
        <dbReference type="ChEBI" id="CHEBI:15377"/>
        <dbReference type="ChEBI" id="CHEBI:30616"/>
        <dbReference type="ChEBI" id="CHEBI:33722"/>
        <dbReference type="ChEBI" id="CHEBI:33723"/>
        <dbReference type="ChEBI" id="CHEBI:43474"/>
        <dbReference type="ChEBI" id="CHEBI:83348"/>
        <dbReference type="ChEBI" id="CHEBI:83350"/>
        <dbReference type="ChEBI" id="CHEBI:456216"/>
        <dbReference type="EC" id="1.3.7.7"/>
    </reaction>
</comment>
<comment type="cofactor">
    <cofactor evidence="1">
        <name>[4Fe-4S] cluster</name>
        <dbReference type="ChEBI" id="CHEBI:49883"/>
    </cofactor>
    <text evidence="1">Binds 1 [4Fe-4S] cluster per heterodimer. The cluster is bound at the heterodimer interface by residues from both subunits.</text>
</comment>
<comment type="pathway">
    <text evidence="1">Porphyrin-containing compound metabolism; chlorophyll biosynthesis (light-independent).</text>
</comment>
<comment type="subunit">
    <text evidence="1">Protochlorophyllide reductase is composed of three subunits; ChlL, ChlN and ChlB. Forms a heterotetramer of two ChlB and two ChlN subunits.</text>
</comment>
<comment type="similarity">
    <text evidence="1">Belongs to the ChlB/BchB/BchZ family.</text>
</comment>
<organism>
    <name type="scientific">Prochlorococcus marinus (strain MIT 9312)</name>
    <dbReference type="NCBI Taxonomy" id="74546"/>
    <lineage>
        <taxon>Bacteria</taxon>
        <taxon>Bacillati</taxon>
        <taxon>Cyanobacteriota</taxon>
        <taxon>Cyanophyceae</taxon>
        <taxon>Synechococcales</taxon>
        <taxon>Prochlorococcaceae</taxon>
        <taxon>Prochlorococcus</taxon>
    </lineage>
</organism>
<accession>Q31BZ0</accession>
<keyword id="KW-0004">4Fe-4S</keyword>
<keyword id="KW-0067">ATP-binding</keyword>
<keyword id="KW-0149">Chlorophyll biosynthesis</keyword>
<keyword id="KW-0408">Iron</keyword>
<keyword id="KW-0411">Iron-sulfur</keyword>
<keyword id="KW-0479">Metal-binding</keyword>
<keyword id="KW-0547">Nucleotide-binding</keyword>
<keyword id="KW-0560">Oxidoreductase</keyword>
<keyword id="KW-0602">Photosynthesis</keyword>
<name>CHLB_PROM9</name>
<dbReference type="EC" id="1.3.7.7" evidence="1"/>
<dbReference type="EMBL" id="CP000111">
    <property type="protein sequence ID" value="ABB49605.1"/>
    <property type="molecule type" value="Genomic_DNA"/>
</dbReference>
<dbReference type="RefSeq" id="WP_011376103.1">
    <property type="nucleotide sequence ID" value="NC_007577.1"/>
</dbReference>
<dbReference type="SMR" id="Q31BZ0"/>
<dbReference type="STRING" id="74546.PMT9312_0544"/>
<dbReference type="KEGG" id="pmi:PMT9312_0544"/>
<dbReference type="eggNOG" id="COG2710">
    <property type="taxonomic scope" value="Bacteria"/>
</dbReference>
<dbReference type="HOGENOM" id="CLU_025470_0_0_3"/>
<dbReference type="OrthoDB" id="5717231at2"/>
<dbReference type="UniPathway" id="UPA00670"/>
<dbReference type="Proteomes" id="UP000002715">
    <property type="component" value="Chromosome"/>
</dbReference>
<dbReference type="GO" id="GO:0051539">
    <property type="term" value="F:4 iron, 4 sulfur cluster binding"/>
    <property type="evidence" value="ECO:0007669"/>
    <property type="project" value="UniProtKB-UniRule"/>
</dbReference>
<dbReference type="GO" id="GO:0005524">
    <property type="term" value="F:ATP binding"/>
    <property type="evidence" value="ECO:0007669"/>
    <property type="project" value="UniProtKB-UniRule"/>
</dbReference>
<dbReference type="GO" id="GO:0046872">
    <property type="term" value="F:metal ion binding"/>
    <property type="evidence" value="ECO:0007669"/>
    <property type="project" value="UniProtKB-KW"/>
</dbReference>
<dbReference type="GO" id="GO:0016730">
    <property type="term" value="F:oxidoreductase activity, acting on iron-sulfur proteins as donors"/>
    <property type="evidence" value="ECO:0007669"/>
    <property type="project" value="InterPro"/>
</dbReference>
<dbReference type="GO" id="GO:0016636">
    <property type="term" value="F:oxidoreductase activity, acting on the CH-CH group of donors, iron-sulfur protein as acceptor"/>
    <property type="evidence" value="ECO:0007669"/>
    <property type="project" value="UniProtKB-UniRule"/>
</dbReference>
<dbReference type="GO" id="GO:0036068">
    <property type="term" value="P:light-independent chlorophyll biosynthetic process"/>
    <property type="evidence" value="ECO:0007669"/>
    <property type="project" value="UniProtKB-UniRule"/>
</dbReference>
<dbReference type="GO" id="GO:0019685">
    <property type="term" value="P:photosynthesis, dark reaction"/>
    <property type="evidence" value="ECO:0007669"/>
    <property type="project" value="InterPro"/>
</dbReference>
<dbReference type="Gene3D" id="1.20.89.20">
    <property type="match status" value="1"/>
</dbReference>
<dbReference type="Gene3D" id="3.40.50.1980">
    <property type="entry name" value="Nitrogenase molybdenum iron protein domain"/>
    <property type="match status" value="3"/>
</dbReference>
<dbReference type="Gene3D" id="1.10.8.550">
    <property type="entry name" value="Proto-chlorophyllide reductase 57 kD subunit B"/>
    <property type="match status" value="1"/>
</dbReference>
<dbReference type="HAMAP" id="MF_00353">
    <property type="entry name" value="ChlB_BchB"/>
    <property type="match status" value="1"/>
</dbReference>
<dbReference type="InterPro" id="IPR050152">
    <property type="entry name" value="ChlB/BchB/BchZ"/>
</dbReference>
<dbReference type="InterPro" id="IPR013580">
    <property type="entry name" value="LI-POR_suB-like_C"/>
</dbReference>
<dbReference type="InterPro" id="IPR000510">
    <property type="entry name" value="Nase/OxRdtase_comp1"/>
</dbReference>
<dbReference type="InterPro" id="IPR042298">
    <property type="entry name" value="P-CP_red_C"/>
</dbReference>
<dbReference type="InterPro" id="IPR005969">
    <property type="entry name" value="Protochl_reductB"/>
</dbReference>
<dbReference type="InterPro" id="IPR016209">
    <property type="entry name" value="Protochlorophyllide_Rdtase"/>
</dbReference>
<dbReference type="NCBIfam" id="TIGR01278">
    <property type="entry name" value="DPOR_BchB"/>
    <property type="match status" value="1"/>
</dbReference>
<dbReference type="NCBIfam" id="NF002790">
    <property type="entry name" value="PRK02910.1-4"/>
    <property type="match status" value="1"/>
</dbReference>
<dbReference type="PANTHER" id="PTHR33712">
    <property type="entry name" value="LIGHT-INDEPENDENT PROTOCHLOROPHYLLIDE REDUCTASE SUBUNIT B"/>
    <property type="match status" value="1"/>
</dbReference>
<dbReference type="PANTHER" id="PTHR33712:SF7">
    <property type="entry name" value="LIGHT-INDEPENDENT PROTOCHLOROPHYLLIDE REDUCTASE SUBUNIT B"/>
    <property type="match status" value="1"/>
</dbReference>
<dbReference type="Pfam" id="PF00148">
    <property type="entry name" value="Oxidored_nitro"/>
    <property type="match status" value="1"/>
</dbReference>
<dbReference type="Pfam" id="PF08369">
    <property type="entry name" value="PCP_red"/>
    <property type="match status" value="1"/>
</dbReference>
<dbReference type="PIRSF" id="PIRSF000163">
    <property type="entry name" value="PCP_ChlB"/>
    <property type="match status" value="1"/>
</dbReference>
<dbReference type="SUPFAM" id="SSF53807">
    <property type="entry name" value="Helical backbone' metal receptor"/>
    <property type="match status" value="1"/>
</dbReference>
<reference key="1">
    <citation type="journal article" date="2006" name="Science">
        <title>Genomic islands and the ecology and evolution of Prochlorococcus.</title>
        <authorList>
            <person name="Coleman M.L."/>
            <person name="Sullivan M.B."/>
            <person name="Martiny A.C."/>
            <person name="Steglich C."/>
            <person name="Barry K."/>
            <person name="Delong E.F."/>
            <person name="Chisholm S.W."/>
        </authorList>
    </citation>
    <scope>NUCLEOTIDE SEQUENCE [LARGE SCALE GENOMIC DNA]</scope>
    <source>
        <strain>MIT 9312</strain>
    </source>
</reference>
<gene>
    <name evidence="1" type="primary">chlB</name>
    <name type="ordered locus">PMT9312_0544</name>
</gene>
<sequence>MELTLWTYEGPPHVGAMRVASSMKDIHYVLHAPQGDTYADLLFTMIERRGQRPPVTYTTFQARDLGGDTAELVKRNITEAVERFKPKTLLVGESCTAELIQDQPGALAKGMGFDIPIVNLELPAYSKKENWGASETFYQIIRTLLKDKVNEIDKINPQRWKSLGRRPKVNILGPTLLGFRCRDDVIEIQRILSEQGIDTNVVAPLGSSPEDIERLIDADINVCLYHEIAEISCEWLKRNCGMEYTTTIPIGIKNTINFIHEVHEKLDLPLTNKGELENKSKLPWYSKSVDSNYLTGKRVFIFGDGTHAIAAAKIAKDELGFEVVGLGTYSREMARQVRAAAKDLNIEALITNSYLEVEDAMKKASPELVLGTQMERHSAKRLGIPCSVISTPMHVQDVPARYSPQMGWEGANVIFDDWVHPLMMGLEEHLIDMFKHDFEFVDGHQSHLGHTATNAPDNKETKQAQSNMNIQEKSILWTESGKAELTKVPFFVRGKVKSNTEKYALSKGLPEINDETLYDAKAFFG</sequence>